<feature type="chain" id="PRO_1000188073" description="Small ribosomal subunit biogenesis GTPase RsgA">
    <location>
        <begin position="1"/>
        <end position="350"/>
    </location>
</feature>
<feature type="domain" description="CP-type G" evidence="2">
    <location>
        <begin position="104"/>
        <end position="273"/>
    </location>
</feature>
<feature type="region of interest" description="Disordered" evidence="3">
    <location>
        <begin position="1"/>
        <end position="33"/>
    </location>
</feature>
<feature type="compositionally biased region" description="Polar residues" evidence="3">
    <location>
        <begin position="1"/>
        <end position="17"/>
    </location>
</feature>
<feature type="binding site" evidence="1">
    <location>
        <begin position="160"/>
        <end position="163"/>
    </location>
    <ligand>
        <name>GTP</name>
        <dbReference type="ChEBI" id="CHEBI:37565"/>
    </ligand>
</feature>
<feature type="binding site" evidence="1">
    <location>
        <begin position="214"/>
        <end position="222"/>
    </location>
    <ligand>
        <name>GTP</name>
        <dbReference type="ChEBI" id="CHEBI:37565"/>
    </ligand>
</feature>
<feature type="binding site" evidence="1">
    <location>
        <position position="297"/>
    </location>
    <ligand>
        <name>Zn(2+)</name>
        <dbReference type="ChEBI" id="CHEBI:29105"/>
    </ligand>
</feature>
<feature type="binding site" evidence="1">
    <location>
        <position position="302"/>
    </location>
    <ligand>
        <name>Zn(2+)</name>
        <dbReference type="ChEBI" id="CHEBI:29105"/>
    </ligand>
</feature>
<feature type="binding site" evidence="1">
    <location>
        <position position="304"/>
    </location>
    <ligand>
        <name>Zn(2+)</name>
        <dbReference type="ChEBI" id="CHEBI:29105"/>
    </ligand>
</feature>
<feature type="binding site" evidence="1">
    <location>
        <position position="310"/>
    </location>
    <ligand>
        <name>Zn(2+)</name>
        <dbReference type="ChEBI" id="CHEBI:29105"/>
    </ligand>
</feature>
<reference key="1">
    <citation type="journal article" date="2008" name="DNA Res.">
        <title>Complete genome sequence and comparative analysis of the wild-type commensal Escherichia coli strain SE11 isolated from a healthy adult.</title>
        <authorList>
            <person name="Oshima K."/>
            <person name="Toh H."/>
            <person name="Ogura Y."/>
            <person name="Sasamoto H."/>
            <person name="Morita H."/>
            <person name="Park S.-H."/>
            <person name="Ooka T."/>
            <person name="Iyoda S."/>
            <person name="Taylor T.D."/>
            <person name="Hayashi T."/>
            <person name="Itoh K."/>
            <person name="Hattori M."/>
        </authorList>
    </citation>
    <scope>NUCLEOTIDE SEQUENCE [LARGE SCALE GENOMIC DNA]</scope>
    <source>
        <strain>SE11</strain>
    </source>
</reference>
<name>RSGA_ECOSE</name>
<evidence type="ECO:0000255" key="1">
    <source>
        <dbReference type="HAMAP-Rule" id="MF_01820"/>
    </source>
</evidence>
<evidence type="ECO:0000255" key="2">
    <source>
        <dbReference type="PROSITE-ProRule" id="PRU01058"/>
    </source>
</evidence>
<evidence type="ECO:0000256" key="3">
    <source>
        <dbReference type="SAM" id="MobiDB-lite"/>
    </source>
</evidence>
<comment type="function">
    <text evidence="1">One of several proteins that assist in the late maturation steps of the functional core of the 30S ribosomal subunit. Helps release RbfA from mature subunits. May play a role in the assembly of ribosomal proteins into the subunit. Circularly permuted GTPase that catalyzes slow GTP hydrolysis, GTPase activity is stimulated by the 30S ribosomal subunit.</text>
</comment>
<comment type="cofactor">
    <cofactor evidence="1">
        <name>Zn(2+)</name>
        <dbReference type="ChEBI" id="CHEBI:29105"/>
    </cofactor>
    <text evidence="1">Binds 1 zinc ion per subunit.</text>
</comment>
<comment type="subunit">
    <text evidence="1">Monomer. Associates with 30S ribosomal subunit, binds 16S rRNA.</text>
</comment>
<comment type="subcellular location">
    <subcellularLocation>
        <location evidence="1">Cytoplasm</location>
    </subcellularLocation>
</comment>
<comment type="similarity">
    <text evidence="1">Belongs to the TRAFAC class YlqF/YawG GTPase family. RsgA subfamily.</text>
</comment>
<gene>
    <name evidence="1" type="primary">rsgA</name>
    <name type="ordered locus">ECSE_4461</name>
</gene>
<organism>
    <name type="scientific">Escherichia coli (strain SE11)</name>
    <dbReference type="NCBI Taxonomy" id="409438"/>
    <lineage>
        <taxon>Bacteria</taxon>
        <taxon>Pseudomonadati</taxon>
        <taxon>Pseudomonadota</taxon>
        <taxon>Gammaproteobacteria</taxon>
        <taxon>Enterobacterales</taxon>
        <taxon>Enterobacteriaceae</taxon>
        <taxon>Escherichia</taxon>
    </lineage>
</organism>
<protein>
    <recommendedName>
        <fullName evidence="1">Small ribosomal subunit biogenesis GTPase RsgA</fullName>
        <ecNumber evidence="1">3.6.1.-</ecNumber>
    </recommendedName>
</protein>
<keyword id="KW-0963">Cytoplasm</keyword>
<keyword id="KW-0342">GTP-binding</keyword>
<keyword id="KW-0378">Hydrolase</keyword>
<keyword id="KW-0479">Metal-binding</keyword>
<keyword id="KW-0547">Nucleotide-binding</keyword>
<keyword id="KW-0690">Ribosome biogenesis</keyword>
<keyword id="KW-0694">RNA-binding</keyword>
<keyword id="KW-0699">rRNA-binding</keyword>
<keyword id="KW-0862">Zinc</keyword>
<accession>B6I268</accession>
<proteinExistence type="inferred from homology"/>
<sequence length="350" mass="39179">MSKNKLSKGQQRRVNANHQRRLKTSKEKPDYDDNLFGEPDEGIVISRFGMHADVESADGDVHRCNIRRTIRSLVTGDRVVWRPGKPAAEGVNVKGIVEAVHERTSVLTRPDFYDGVKPIAANIDQIVIVSAILPELSLNIIDRYLVACETLQIEPIIVLNKIDLLDDEGMAFVNEQMDIYRNIGYRVLMVSSHTQDGLKPLEEALTGRISIFAGQSGVGKSSLLNALLGLQKEILTNDVSDNSGLGQHTTTAARLYHFPHGGDVIDSPGVREFGLWHLEPEQITQGFVEFHDYLGLCKYRDCKHDTDPGCAIREAVEEGKIAETRFENYHRILESMAQVKTRKNFSDTDD</sequence>
<dbReference type="EC" id="3.6.1.-" evidence="1"/>
<dbReference type="EMBL" id="AP009240">
    <property type="protein sequence ID" value="BAG79985.1"/>
    <property type="molecule type" value="Genomic_DNA"/>
</dbReference>
<dbReference type="RefSeq" id="WP_000041970.1">
    <property type="nucleotide sequence ID" value="NC_011415.1"/>
</dbReference>
<dbReference type="SMR" id="B6I268"/>
<dbReference type="GeneID" id="93777661"/>
<dbReference type="KEGG" id="ecy:ECSE_4461"/>
<dbReference type="HOGENOM" id="CLU_033617_2_0_6"/>
<dbReference type="Proteomes" id="UP000008199">
    <property type="component" value="Chromosome"/>
</dbReference>
<dbReference type="GO" id="GO:0005737">
    <property type="term" value="C:cytoplasm"/>
    <property type="evidence" value="ECO:0007669"/>
    <property type="project" value="UniProtKB-SubCell"/>
</dbReference>
<dbReference type="GO" id="GO:0005525">
    <property type="term" value="F:GTP binding"/>
    <property type="evidence" value="ECO:0007669"/>
    <property type="project" value="UniProtKB-UniRule"/>
</dbReference>
<dbReference type="GO" id="GO:0003924">
    <property type="term" value="F:GTPase activity"/>
    <property type="evidence" value="ECO:0007669"/>
    <property type="project" value="UniProtKB-UniRule"/>
</dbReference>
<dbReference type="GO" id="GO:0046872">
    <property type="term" value="F:metal ion binding"/>
    <property type="evidence" value="ECO:0007669"/>
    <property type="project" value="UniProtKB-KW"/>
</dbReference>
<dbReference type="GO" id="GO:0019843">
    <property type="term" value="F:rRNA binding"/>
    <property type="evidence" value="ECO:0007669"/>
    <property type="project" value="UniProtKB-KW"/>
</dbReference>
<dbReference type="GO" id="GO:0042274">
    <property type="term" value="P:ribosomal small subunit biogenesis"/>
    <property type="evidence" value="ECO:0007669"/>
    <property type="project" value="UniProtKB-UniRule"/>
</dbReference>
<dbReference type="CDD" id="cd01854">
    <property type="entry name" value="YjeQ_EngC"/>
    <property type="match status" value="1"/>
</dbReference>
<dbReference type="FunFam" id="1.10.40.50:FF:000001">
    <property type="entry name" value="Small ribosomal subunit biogenesis GTPase RsgA"/>
    <property type="match status" value="1"/>
</dbReference>
<dbReference type="FunFam" id="2.40.50.140:FF:000122">
    <property type="entry name" value="Small ribosomal subunit biogenesis GTPase RsgA"/>
    <property type="match status" value="1"/>
</dbReference>
<dbReference type="FunFam" id="3.40.50.300:FF:000389">
    <property type="entry name" value="Small ribosomal subunit biogenesis GTPase RsgA"/>
    <property type="match status" value="1"/>
</dbReference>
<dbReference type="Gene3D" id="2.40.50.140">
    <property type="entry name" value="Nucleic acid-binding proteins"/>
    <property type="match status" value="1"/>
</dbReference>
<dbReference type="Gene3D" id="3.40.50.300">
    <property type="entry name" value="P-loop containing nucleotide triphosphate hydrolases"/>
    <property type="match status" value="1"/>
</dbReference>
<dbReference type="Gene3D" id="1.10.40.50">
    <property type="entry name" value="Probable gtpase engc, domain 3"/>
    <property type="match status" value="1"/>
</dbReference>
<dbReference type="HAMAP" id="MF_01820">
    <property type="entry name" value="GTPase_RsgA"/>
    <property type="match status" value="1"/>
</dbReference>
<dbReference type="InterPro" id="IPR030378">
    <property type="entry name" value="G_CP_dom"/>
</dbReference>
<dbReference type="InterPro" id="IPR012340">
    <property type="entry name" value="NA-bd_OB-fold"/>
</dbReference>
<dbReference type="InterPro" id="IPR027417">
    <property type="entry name" value="P-loop_NTPase"/>
</dbReference>
<dbReference type="InterPro" id="IPR004881">
    <property type="entry name" value="Ribosome_biogen_GTPase_RsgA"/>
</dbReference>
<dbReference type="InterPro" id="IPR010914">
    <property type="entry name" value="RsgA_GTPase_dom"/>
</dbReference>
<dbReference type="NCBIfam" id="NF008931">
    <property type="entry name" value="PRK12288.1"/>
    <property type="match status" value="1"/>
</dbReference>
<dbReference type="NCBIfam" id="TIGR00157">
    <property type="entry name" value="ribosome small subunit-dependent GTPase A"/>
    <property type="match status" value="1"/>
</dbReference>
<dbReference type="PANTHER" id="PTHR32120">
    <property type="entry name" value="SMALL RIBOSOMAL SUBUNIT BIOGENESIS GTPASE RSGA"/>
    <property type="match status" value="1"/>
</dbReference>
<dbReference type="PANTHER" id="PTHR32120:SF11">
    <property type="entry name" value="SMALL RIBOSOMAL SUBUNIT BIOGENESIS GTPASE RSGA 1, MITOCHONDRIAL-RELATED"/>
    <property type="match status" value="1"/>
</dbReference>
<dbReference type="Pfam" id="PF03193">
    <property type="entry name" value="RsgA_GTPase"/>
    <property type="match status" value="1"/>
</dbReference>
<dbReference type="SUPFAM" id="SSF52540">
    <property type="entry name" value="P-loop containing nucleoside triphosphate hydrolases"/>
    <property type="match status" value="1"/>
</dbReference>
<dbReference type="PROSITE" id="PS50936">
    <property type="entry name" value="ENGC_GTPASE"/>
    <property type="match status" value="1"/>
</dbReference>
<dbReference type="PROSITE" id="PS51721">
    <property type="entry name" value="G_CP"/>
    <property type="match status" value="1"/>
</dbReference>